<comment type="function">
    <text evidence="1">Responsible for the release of ribosomes from messenger RNA at the termination of protein biosynthesis. May increase the efficiency of translation by recycling ribosomes from one round of translation to another.</text>
</comment>
<comment type="subcellular location">
    <subcellularLocation>
        <location evidence="1">Cytoplasm</location>
    </subcellularLocation>
</comment>
<comment type="similarity">
    <text evidence="1">Belongs to the RRF family.</text>
</comment>
<organism>
    <name type="scientific">Haemophilus influenzae (strain 86-028NP)</name>
    <dbReference type="NCBI Taxonomy" id="281310"/>
    <lineage>
        <taxon>Bacteria</taxon>
        <taxon>Pseudomonadati</taxon>
        <taxon>Pseudomonadota</taxon>
        <taxon>Gammaproteobacteria</taxon>
        <taxon>Pasteurellales</taxon>
        <taxon>Pasteurellaceae</taxon>
        <taxon>Haemophilus</taxon>
    </lineage>
</organism>
<dbReference type="EMBL" id="CP000057">
    <property type="protein sequence ID" value="AAX87855.1"/>
    <property type="molecule type" value="Genomic_DNA"/>
</dbReference>
<dbReference type="RefSeq" id="WP_005652401.1">
    <property type="nucleotide sequence ID" value="NC_007146.2"/>
</dbReference>
<dbReference type="SMR" id="Q4QM92"/>
<dbReference type="GeneID" id="93219849"/>
<dbReference type="KEGG" id="hit:NTHI0972"/>
<dbReference type="HOGENOM" id="CLU_073981_2_1_6"/>
<dbReference type="Proteomes" id="UP000002525">
    <property type="component" value="Chromosome"/>
</dbReference>
<dbReference type="GO" id="GO:0005829">
    <property type="term" value="C:cytosol"/>
    <property type="evidence" value="ECO:0007669"/>
    <property type="project" value="GOC"/>
</dbReference>
<dbReference type="GO" id="GO:0043023">
    <property type="term" value="F:ribosomal large subunit binding"/>
    <property type="evidence" value="ECO:0007669"/>
    <property type="project" value="TreeGrafter"/>
</dbReference>
<dbReference type="GO" id="GO:0002184">
    <property type="term" value="P:cytoplasmic translational termination"/>
    <property type="evidence" value="ECO:0007669"/>
    <property type="project" value="TreeGrafter"/>
</dbReference>
<dbReference type="CDD" id="cd00520">
    <property type="entry name" value="RRF"/>
    <property type="match status" value="1"/>
</dbReference>
<dbReference type="FunFam" id="1.10.132.20:FF:000001">
    <property type="entry name" value="Ribosome-recycling factor"/>
    <property type="match status" value="1"/>
</dbReference>
<dbReference type="FunFam" id="3.30.1360.40:FF:000001">
    <property type="entry name" value="Ribosome-recycling factor"/>
    <property type="match status" value="1"/>
</dbReference>
<dbReference type="Gene3D" id="3.30.1360.40">
    <property type="match status" value="1"/>
</dbReference>
<dbReference type="Gene3D" id="1.10.132.20">
    <property type="entry name" value="Ribosome-recycling factor"/>
    <property type="match status" value="1"/>
</dbReference>
<dbReference type="HAMAP" id="MF_00040">
    <property type="entry name" value="RRF"/>
    <property type="match status" value="1"/>
</dbReference>
<dbReference type="InterPro" id="IPR002661">
    <property type="entry name" value="Ribosome_recyc_fac"/>
</dbReference>
<dbReference type="InterPro" id="IPR023584">
    <property type="entry name" value="Ribosome_recyc_fac_dom"/>
</dbReference>
<dbReference type="InterPro" id="IPR036191">
    <property type="entry name" value="RRF_sf"/>
</dbReference>
<dbReference type="NCBIfam" id="TIGR00496">
    <property type="entry name" value="frr"/>
    <property type="match status" value="1"/>
</dbReference>
<dbReference type="PANTHER" id="PTHR20982:SF3">
    <property type="entry name" value="MITOCHONDRIAL RIBOSOME RECYCLING FACTOR PSEUDO 1"/>
    <property type="match status" value="1"/>
</dbReference>
<dbReference type="PANTHER" id="PTHR20982">
    <property type="entry name" value="RIBOSOME RECYCLING FACTOR"/>
    <property type="match status" value="1"/>
</dbReference>
<dbReference type="Pfam" id="PF01765">
    <property type="entry name" value="RRF"/>
    <property type="match status" value="1"/>
</dbReference>
<dbReference type="SUPFAM" id="SSF55194">
    <property type="entry name" value="Ribosome recycling factor, RRF"/>
    <property type="match status" value="1"/>
</dbReference>
<accession>Q4QM92</accession>
<feature type="chain" id="PRO_0000167469" description="Ribosome-recycling factor">
    <location>
        <begin position="1"/>
        <end position="185"/>
    </location>
</feature>
<protein>
    <recommendedName>
        <fullName evidence="1">Ribosome-recycling factor</fullName>
        <shortName evidence="1">RRF</shortName>
    </recommendedName>
    <alternativeName>
        <fullName evidence="1">Ribosome-releasing factor</fullName>
    </alternativeName>
</protein>
<keyword id="KW-0963">Cytoplasm</keyword>
<keyword id="KW-0648">Protein biosynthesis</keyword>
<evidence type="ECO:0000255" key="1">
    <source>
        <dbReference type="HAMAP-Rule" id="MF_00040"/>
    </source>
</evidence>
<name>RRF_HAEI8</name>
<gene>
    <name evidence="1" type="primary">frr</name>
    <name type="ordered locus">NTHI0972</name>
</gene>
<proteinExistence type="inferred from homology"/>
<reference key="1">
    <citation type="journal article" date="2005" name="J. Bacteriol.">
        <title>Genomic sequence of an otitis media isolate of nontypeable Haemophilus influenzae: comparative study with H. influenzae serotype d, strain KW20.</title>
        <authorList>
            <person name="Harrison A."/>
            <person name="Dyer D.W."/>
            <person name="Gillaspy A."/>
            <person name="Ray W.C."/>
            <person name="Mungur R."/>
            <person name="Carson M.B."/>
            <person name="Zhong H."/>
            <person name="Gipson J."/>
            <person name="Gipson M."/>
            <person name="Johnson L.S."/>
            <person name="Lewis L."/>
            <person name="Bakaletz L.O."/>
            <person name="Munson R.S. Jr."/>
        </authorList>
    </citation>
    <scope>NUCLEOTIDE SEQUENCE [LARGE SCALE GENOMIC DNA]</scope>
    <source>
        <strain>86-028NP</strain>
    </source>
</reference>
<sequence>MLNQIKKDAQDRMEKSLEALKGHISKIRTGRAQPSLLDAIQVEYYGAATPLRQLANVVAEDARTLAVTVFDRSLISAVEKAILTSDLGLNPSSAGTTIRVPLPPLTEERRRDLIKIVKGEGEQGKVAIRNVRRDANDKIKALLKDKEISENEQHKAEEEIQKITDIYIKKVDEVLADKEKELMDF</sequence>